<comment type="function">
    <text evidence="1">Phosphorylation of dTMP to form dTDP in both de novo and salvage pathways of dTTP synthesis.</text>
</comment>
<comment type="catalytic activity">
    <reaction evidence="1">
        <text>dTMP + ATP = dTDP + ADP</text>
        <dbReference type="Rhea" id="RHEA:13517"/>
        <dbReference type="ChEBI" id="CHEBI:30616"/>
        <dbReference type="ChEBI" id="CHEBI:58369"/>
        <dbReference type="ChEBI" id="CHEBI:63528"/>
        <dbReference type="ChEBI" id="CHEBI:456216"/>
        <dbReference type="EC" id="2.7.4.9"/>
    </reaction>
</comment>
<comment type="similarity">
    <text evidence="1">Belongs to the thymidylate kinase family.</text>
</comment>
<keyword id="KW-0067">ATP-binding</keyword>
<keyword id="KW-0418">Kinase</keyword>
<keyword id="KW-0545">Nucleotide biosynthesis</keyword>
<keyword id="KW-0547">Nucleotide-binding</keyword>
<keyword id="KW-0808">Transferase</keyword>
<organism>
    <name type="scientific">Listeria monocytogenes serotype 4b (strain F2365)</name>
    <dbReference type="NCBI Taxonomy" id="265669"/>
    <lineage>
        <taxon>Bacteria</taxon>
        <taxon>Bacillati</taxon>
        <taxon>Bacillota</taxon>
        <taxon>Bacilli</taxon>
        <taxon>Bacillales</taxon>
        <taxon>Listeriaceae</taxon>
        <taxon>Listeria</taxon>
    </lineage>
</organism>
<gene>
    <name evidence="1" type="primary">tmk</name>
    <name type="ordered locus">LMOf2365_2672</name>
</gene>
<accession>Q71W79</accession>
<dbReference type="EC" id="2.7.4.9" evidence="1"/>
<dbReference type="EMBL" id="AE017262">
    <property type="protein sequence ID" value="AAT05437.1"/>
    <property type="molecule type" value="Genomic_DNA"/>
</dbReference>
<dbReference type="RefSeq" id="WP_003722053.1">
    <property type="nucleotide sequence ID" value="NC_002973.6"/>
</dbReference>
<dbReference type="SMR" id="Q71W79"/>
<dbReference type="KEGG" id="lmf:LMOf2365_2672"/>
<dbReference type="HOGENOM" id="CLU_049131_0_2_9"/>
<dbReference type="GO" id="GO:0005829">
    <property type="term" value="C:cytosol"/>
    <property type="evidence" value="ECO:0007669"/>
    <property type="project" value="TreeGrafter"/>
</dbReference>
<dbReference type="GO" id="GO:0005524">
    <property type="term" value="F:ATP binding"/>
    <property type="evidence" value="ECO:0007669"/>
    <property type="project" value="UniProtKB-UniRule"/>
</dbReference>
<dbReference type="GO" id="GO:0004798">
    <property type="term" value="F:dTMP kinase activity"/>
    <property type="evidence" value="ECO:0007669"/>
    <property type="project" value="UniProtKB-UniRule"/>
</dbReference>
<dbReference type="GO" id="GO:0006233">
    <property type="term" value="P:dTDP biosynthetic process"/>
    <property type="evidence" value="ECO:0007669"/>
    <property type="project" value="InterPro"/>
</dbReference>
<dbReference type="GO" id="GO:0006235">
    <property type="term" value="P:dTTP biosynthetic process"/>
    <property type="evidence" value="ECO:0007669"/>
    <property type="project" value="UniProtKB-UniRule"/>
</dbReference>
<dbReference type="GO" id="GO:0006227">
    <property type="term" value="P:dUDP biosynthetic process"/>
    <property type="evidence" value="ECO:0007669"/>
    <property type="project" value="TreeGrafter"/>
</dbReference>
<dbReference type="CDD" id="cd01672">
    <property type="entry name" value="TMPK"/>
    <property type="match status" value="1"/>
</dbReference>
<dbReference type="FunFam" id="3.40.50.300:FF:000225">
    <property type="entry name" value="Thymidylate kinase"/>
    <property type="match status" value="1"/>
</dbReference>
<dbReference type="Gene3D" id="3.40.50.300">
    <property type="entry name" value="P-loop containing nucleotide triphosphate hydrolases"/>
    <property type="match status" value="1"/>
</dbReference>
<dbReference type="HAMAP" id="MF_00165">
    <property type="entry name" value="Thymidylate_kinase"/>
    <property type="match status" value="1"/>
</dbReference>
<dbReference type="InterPro" id="IPR027417">
    <property type="entry name" value="P-loop_NTPase"/>
</dbReference>
<dbReference type="InterPro" id="IPR039430">
    <property type="entry name" value="Thymidylate_kin-like_dom"/>
</dbReference>
<dbReference type="InterPro" id="IPR018095">
    <property type="entry name" value="Thymidylate_kin_CS"/>
</dbReference>
<dbReference type="InterPro" id="IPR018094">
    <property type="entry name" value="Thymidylate_kinase"/>
</dbReference>
<dbReference type="NCBIfam" id="TIGR00041">
    <property type="entry name" value="DTMP_kinase"/>
    <property type="match status" value="1"/>
</dbReference>
<dbReference type="PANTHER" id="PTHR10344">
    <property type="entry name" value="THYMIDYLATE KINASE"/>
    <property type="match status" value="1"/>
</dbReference>
<dbReference type="PANTHER" id="PTHR10344:SF4">
    <property type="entry name" value="UMP-CMP KINASE 2, MITOCHONDRIAL"/>
    <property type="match status" value="1"/>
</dbReference>
<dbReference type="Pfam" id="PF02223">
    <property type="entry name" value="Thymidylate_kin"/>
    <property type="match status" value="1"/>
</dbReference>
<dbReference type="SUPFAM" id="SSF52540">
    <property type="entry name" value="P-loop containing nucleoside triphosphate hydrolases"/>
    <property type="match status" value="1"/>
</dbReference>
<dbReference type="PROSITE" id="PS01331">
    <property type="entry name" value="THYMIDYLATE_KINASE"/>
    <property type="match status" value="1"/>
</dbReference>
<protein>
    <recommendedName>
        <fullName evidence="1">Thymidylate kinase</fullName>
        <ecNumber evidence="1">2.7.4.9</ecNumber>
    </recommendedName>
    <alternativeName>
        <fullName evidence="1">dTMP kinase</fullName>
    </alternativeName>
</protein>
<sequence length="208" mass="23098">MKAIFITLEGPDGSGKTTVGTLLNQKMTEAGIDFIKTREPGGSPISEKVRNIVLGIGNEEMDPKTEVLLIAGARRQHVVETIRPALAAGKTVLCDRFMDSSLAYQGAGRDMNMEQVLQVNLYAIEDTLPDRTYYLDVPAEVGLARIAANKGREVNRLDKEDITYHEKVQAGYEKVINMFPERFMRVDATKTPEEITETILADILRQLA</sequence>
<proteinExistence type="inferred from homology"/>
<reference key="1">
    <citation type="journal article" date="2004" name="Nucleic Acids Res.">
        <title>Whole genome comparisons of serotype 4b and 1/2a strains of the food-borne pathogen Listeria monocytogenes reveal new insights into the core genome components of this species.</title>
        <authorList>
            <person name="Nelson K.E."/>
            <person name="Fouts D.E."/>
            <person name="Mongodin E.F."/>
            <person name="Ravel J."/>
            <person name="DeBoy R.T."/>
            <person name="Kolonay J.F."/>
            <person name="Rasko D.A."/>
            <person name="Angiuoli S.V."/>
            <person name="Gill S.R."/>
            <person name="Paulsen I.T."/>
            <person name="Peterson J.D."/>
            <person name="White O."/>
            <person name="Nelson W.C."/>
            <person name="Nierman W.C."/>
            <person name="Beanan M.J."/>
            <person name="Brinkac L.M."/>
            <person name="Daugherty S.C."/>
            <person name="Dodson R.J."/>
            <person name="Durkin A.S."/>
            <person name="Madupu R."/>
            <person name="Haft D.H."/>
            <person name="Selengut J."/>
            <person name="Van Aken S.E."/>
            <person name="Khouri H.M."/>
            <person name="Fedorova N."/>
            <person name="Forberger H.A."/>
            <person name="Tran B."/>
            <person name="Kathariou S."/>
            <person name="Wonderling L.D."/>
            <person name="Uhlich G.A."/>
            <person name="Bayles D.O."/>
            <person name="Luchansky J.B."/>
            <person name="Fraser C.M."/>
        </authorList>
    </citation>
    <scope>NUCLEOTIDE SEQUENCE [LARGE SCALE GENOMIC DNA]</scope>
    <source>
        <strain>F2365</strain>
    </source>
</reference>
<feature type="chain" id="PRO_0000155296" description="Thymidylate kinase">
    <location>
        <begin position="1"/>
        <end position="208"/>
    </location>
</feature>
<feature type="binding site" evidence="1">
    <location>
        <begin position="10"/>
        <end position="17"/>
    </location>
    <ligand>
        <name>ATP</name>
        <dbReference type="ChEBI" id="CHEBI:30616"/>
    </ligand>
</feature>
<evidence type="ECO:0000255" key="1">
    <source>
        <dbReference type="HAMAP-Rule" id="MF_00165"/>
    </source>
</evidence>
<name>KTHY_LISMF</name>